<name>OMCBC_CHLTH</name>
<keyword id="KW-0133">Cell shape</keyword>
<keyword id="KW-1015">Disulfide bond</keyword>
<keyword id="KW-0574">Periplasm</keyword>
<keyword id="KW-0732">Signal</keyword>
<sequence>MNKLIRRAVTIFAVTSVASLFASGVLETSMAESLSTNVISLADTKAKDNTSHKSKKARKNHSKETPVDRKEVAPVHESKATGPKQDSCFGRMYTVKVNDDRNVEITQAVPEYATVGSPYPIEITATGKRDCVDVIITQQLPCEAEFVRSDPATTPTADGKLVWKIDRLGQGEKSKITVWVKPLKEGCCFTAATVCACPEIRSVTKCGQPAICVKQEGPENACLRCPVVYKINVVNQGTATARNVVVENPVPDGYAHSSGQRVLTFTLGDMQPGEHRTITVEFCPLKRGRATNIATVSYCGGHKNTASVTTVINEPCVQVSIAGADWSYVCKPVEYVISVSNPGDLVLRDVVVEDTLSPGVTVLEAAGAQISCNKVVWTVKELNPGESLQYKVLVRAQTPGQFTNNVVVKSCSDCGTCTSCAEATTYWKGVAATHMCVVDTCDPVCVGENTVYRICVTNRGSAEDTNVSLMLKFSKELQPVSFSGPTKGTITGNTVVFDSLPRLGSKETVEFSVTLKAVSAGDARGEAILSSDTLTVPVSDTENTHIY</sequence>
<organism>
    <name type="scientific">Chlamydia trachomatis</name>
    <dbReference type="NCBI Taxonomy" id="813"/>
    <lineage>
        <taxon>Bacteria</taxon>
        <taxon>Pseudomonadati</taxon>
        <taxon>Chlamydiota</taxon>
        <taxon>Chlamydiia</taxon>
        <taxon>Chlamydiales</taxon>
        <taxon>Chlamydiaceae</taxon>
        <taxon>Chlamydia/Chlamydophila group</taxon>
        <taxon>Chlamydia</taxon>
    </lineage>
</organism>
<feature type="signal peptide" evidence="2">
    <location>
        <begin position="1"/>
        <end position="22"/>
    </location>
</feature>
<feature type="propeptide" id="PRO_0000020168" evidence="2">
    <location>
        <begin position="23"/>
        <end position="40"/>
    </location>
</feature>
<feature type="chain" id="PRO_0000020169" description="Large cysteine-rich periplasmic protein OmcB, serovar C">
    <location>
        <begin position="41"/>
        <end position="547"/>
    </location>
</feature>
<feature type="region of interest" description="Disordered" evidence="3">
    <location>
        <begin position="45"/>
        <end position="84"/>
    </location>
</feature>
<feature type="compositionally biased region" description="Basic residues" evidence="3">
    <location>
        <begin position="52"/>
        <end position="61"/>
    </location>
</feature>
<feature type="compositionally biased region" description="Basic and acidic residues" evidence="3">
    <location>
        <begin position="62"/>
        <end position="79"/>
    </location>
</feature>
<dbReference type="EMBL" id="X54388">
    <property type="protein sequence ID" value="CAA38257.1"/>
    <property type="molecule type" value="Genomic_DNA"/>
</dbReference>
<dbReference type="EMBL" id="M85197">
    <property type="protein sequence ID" value="AAA23159.1"/>
    <property type="molecule type" value="Genomic_DNA"/>
</dbReference>
<dbReference type="PIR" id="D71515">
    <property type="entry name" value="D71515"/>
</dbReference>
<dbReference type="RefSeq" id="WP_015505969.1">
    <property type="nucleotide sequence ID" value="NZ_CAWTYZ010000001.1"/>
</dbReference>
<dbReference type="GO" id="GO:0042597">
    <property type="term" value="C:periplasmic space"/>
    <property type="evidence" value="ECO:0007669"/>
    <property type="project" value="UniProtKB-SubCell"/>
</dbReference>
<dbReference type="GO" id="GO:0005201">
    <property type="term" value="F:extracellular matrix structural constituent"/>
    <property type="evidence" value="ECO:0007669"/>
    <property type="project" value="InterPro"/>
</dbReference>
<dbReference type="GO" id="GO:0008360">
    <property type="term" value="P:regulation of cell shape"/>
    <property type="evidence" value="ECO:0007669"/>
    <property type="project" value="UniProtKB-KW"/>
</dbReference>
<dbReference type="Gene3D" id="2.60.40.10">
    <property type="entry name" value="Immunoglobulins"/>
    <property type="match status" value="1"/>
</dbReference>
<dbReference type="InterPro" id="IPR003506">
    <property type="entry name" value="Chlam_OMP6"/>
</dbReference>
<dbReference type="InterPro" id="IPR051172">
    <property type="entry name" value="Chlamydia_OmcB"/>
</dbReference>
<dbReference type="InterPro" id="IPR047589">
    <property type="entry name" value="DUF11_rpt"/>
</dbReference>
<dbReference type="InterPro" id="IPR013783">
    <property type="entry name" value="Ig-like_fold"/>
</dbReference>
<dbReference type="InterPro" id="IPR001434">
    <property type="entry name" value="OmcB-like_DUF11"/>
</dbReference>
<dbReference type="NCBIfam" id="TIGR01451">
    <property type="entry name" value="B_ant_repeat"/>
    <property type="match status" value="1"/>
</dbReference>
<dbReference type="PANTHER" id="PTHR34819">
    <property type="entry name" value="LARGE CYSTEINE-RICH PERIPLASMIC PROTEIN OMCB"/>
    <property type="match status" value="1"/>
</dbReference>
<dbReference type="PANTHER" id="PTHR34819:SF4">
    <property type="entry name" value="LARGE CYSTEINE-RICH PERIPLASMIC PROTEIN OMCB"/>
    <property type="match status" value="1"/>
</dbReference>
<dbReference type="Pfam" id="PF03504">
    <property type="entry name" value="Chlam_OMP6"/>
    <property type="match status" value="1"/>
</dbReference>
<dbReference type="Pfam" id="PF01345">
    <property type="entry name" value="DUF11"/>
    <property type="match status" value="3"/>
</dbReference>
<dbReference type="PRINTS" id="PR01336">
    <property type="entry name" value="CHLAMIDIAOM6"/>
</dbReference>
<proteinExistence type="evidence at transcript level"/>
<accession>P26758</accession>
<gene>
    <name type="primary">omcB</name>
    <name type="synonym">omp2</name>
    <name type="synonym">omp2B</name>
</gene>
<evidence type="ECO:0000250" key="1"/>
<evidence type="ECO:0000255" key="2"/>
<evidence type="ECO:0000256" key="3">
    <source>
        <dbReference type="SAM" id="MobiDB-lite"/>
    </source>
</evidence>
<evidence type="ECO:0000305" key="4"/>
<reference key="1">
    <citation type="journal article" date="1991" name="Infect. Immun.">
        <title>Sequence diversity of the 60-kilodalton protein and of a putative 15-kilodalton protein between the trachoma and lymphogranuloma venereum biovars of Chlamydia trachomatis.</title>
        <authorList>
            <person name="de la Maza L.M."/>
            <person name="Fiedler T.J."/>
            <person name="Carlson E.J."/>
            <person name="Markoff B.A."/>
            <person name="Peterson E.M."/>
        </authorList>
    </citation>
    <scope>NUCLEOTIDE SEQUENCE [GENOMIC DNA]</scope>
    <source>
        <strain>C/TW-3</strain>
    </source>
</reference>
<reference key="2">
    <citation type="submission" date="1992-02" db="EMBL/GenBank/DDBJ databases">
        <title>The nucleotide sequences of 10 and 60 kDa cysteine-rich outer membrane protein genes of Chlamydia trachomatis serovar F.</title>
        <authorList>
            <person name="Zhang Y.-X."/>
            <person name="Caldwell H.D."/>
        </authorList>
    </citation>
    <scope>NUCLEOTIDE SEQUENCE [GENOMIC DNA]</scope>
    <source>
        <strain>C/TW-3</strain>
    </source>
</reference>
<comment type="function">
    <text evidence="1">In elementary bodies (EBs, the infectious stage, which is able to survive outside the host cell) provides the structural integrity of the outer envelope through disulfide cross-links with the small cysteine-rich protein and the major outer membrane porin. It has been described in publications as the Sarkosyl-insoluble COMC (Chlamydia outer membrane complex), and serves as the functional equivalent of peptidoglycan (By similarity).</text>
</comment>
<comment type="subunit">
    <text evidence="1">Part of a disulfide cross-linked outer membrane complex (COMC) composed of the major outer membrane porin (MOMP), the small cysteine-rich protein (OmcA) and the large cysteine-rich periplasmic protein (OmcB).</text>
</comment>
<comment type="subcellular location">
    <subcellularLocation>
        <location evidence="4">Periplasm</location>
    </subcellularLocation>
</comment>
<comment type="developmental stage">
    <text>It is present but the disulfide bonds are reduced in the intracellular reticulate bodies (RBs).</text>
</comment>
<comment type="caution">
    <text evidence="4">Was thought to be an outer membrane protein as it is part of a disulfide cross-linked complex that is insoluble in the detergent Sarkosyl; however based on experiments in C.psittaci it is likely to be periplasmic.</text>
</comment>
<protein>
    <recommendedName>
        <fullName>Large cysteine-rich periplasmic protein OmcB, serovar C</fullName>
        <shortName>Large-CRP</shortName>
    </recommendedName>
    <alternativeName>
        <fullName>60 kDa CRP</fullName>
    </alternativeName>
    <alternativeName>
        <fullName>60 kDa outer membrane protein</fullName>
    </alternativeName>
    <alternativeName>
        <fullName>Cysteine-rich outer membrane protein</fullName>
    </alternativeName>
</protein>